<comment type="function">
    <text evidence="2">Formate dehydrogenase allows E.coli to use formate as major electron donor during anaerobic respiration, when nitrate is used as electron acceptor. The beta subunit FdnH is an electron transfer unit containing 4 iron-sulfur clusters; it serves as a conduit for electrons that are transferred from the formate oxidation site in the alpha subunit (FdnG) to the menaquinone associated with the gamma subunit (FdnI) of formate dehydrogenase-N. Formate dehydrogenase-N is part of a system that generates proton motive force, together with the dissimilatory nitrate reductase (Nar).</text>
</comment>
<comment type="cofactor">
    <cofactor evidence="2">
        <name>[4Fe-4S] cluster</name>
        <dbReference type="ChEBI" id="CHEBI:49883"/>
    </cofactor>
    <text evidence="2">Binds 4 [4Fe-4S] clusters per subunit.</text>
</comment>
<comment type="subunit">
    <text evidence="2">Trimer of heterotrimers, consisting of subunits alpha, beta and gamma.</text>
</comment>
<comment type="subcellular location">
    <subcellularLocation>
        <location evidence="2">Cell inner membrane</location>
        <topology evidence="2">Single-pass membrane protein</topology>
    </subcellularLocation>
</comment>
<comment type="induction">
    <text evidence="3">By nitrate under anaerobic conditions.</text>
</comment>
<comment type="miscellaneous">
    <text>The 4Fe-4S clusters from PubMed:11884747 are renumbered in standard order.</text>
</comment>
<reference key="1">
    <citation type="journal article" date="1991" name="J. Biol. Chem.">
        <title>Nitrate-inducible formate dehydrogenase in Escherichia coli K-12. I. Nucleotide sequence of the fdnGHI operon and evidence that opal (UGA) encodes selenocysteine.</title>
        <authorList>
            <person name="Berg B.L."/>
            <person name="Li J."/>
            <person name="Heider J."/>
            <person name="Stewart V."/>
        </authorList>
    </citation>
    <scope>NUCLEOTIDE SEQUENCE [GENOMIC DNA]</scope>
    <source>
        <strain>K12</strain>
    </source>
</reference>
<reference key="2">
    <citation type="journal article" date="1996" name="DNA Res.">
        <title>A 570-kb DNA sequence of the Escherichia coli K-12 genome corresponding to the 28.0-40.1 min region on the linkage map.</title>
        <authorList>
            <person name="Aiba H."/>
            <person name="Baba T."/>
            <person name="Fujita K."/>
            <person name="Hayashi K."/>
            <person name="Inada T."/>
            <person name="Isono K."/>
            <person name="Itoh T."/>
            <person name="Kasai H."/>
            <person name="Kashimoto K."/>
            <person name="Kimura S."/>
            <person name="Kitakawa M."/>
            <person name="Kitagawa M."/>
            <person name="Makino K."/>
            <person name="Miki T."/>
            <person name="Mizobuchi K."/>
            <person name="Mori H."/>
            <person name="Mori T."/>
            <person name="Motomura K."/>
            <person name="Nakade S."/>
            <person name="Nakamura Y."/>
            <person name="Nashimoto H."/>
            <person name="Nishio Y."/>
            <person name="Oshima T."/>
            <person name="Saito N."/>
            <person name="Sampei G."/>
            <person name="Seki Y."/>
            <person name="Sivasundaram S."/>
            <person name="Tagami H."/>
            <person name="Takeda J."/>
            <person name="Takemoto K."/>
            <person name="Takeuchi Y."/>
            <person name="Wada C."/>
            <person name="Yamamoto Y."/>
            <person name="Horiuchi T."/>
        </authorList>
    </citation>
    <scope>NUCLEOTIDE SEQUENCE [LARGE SCALE GENOMIC DNA]</scope>
    <source>
        <strain>K12 / W3110 / ATCC 27325 / DSM 5911</strain>
    </source>
</reference>
<reference key="3">
    <citation type="journal article" date="1997" name="Science">
        <title>The complete genome sequence of Escherichia coli K-12.</title>
        <authorList>
            <person name="Blattner F.R."/>
            <person name="Plunkett G. III"/>
            <person name="Bloch C.A."/>
            <person name="Perna N.T."/>
            <person name="Burland V."/>
            <person name="Riley M."/>
            <person name="Collado-Vides J."/>
            <person name="Glasner J.D."/>
            <person name="Rode C.K."/>
            <person name="Mayhew G.F."/>
            <person name="Gregor J."/>
            <person name="Davis N.W."/>
            <person name="Kirkpatrick H.A."/>
            <person name="Goeden M.A."/>
            <person name="Rose D.J."/>
            <person name="Mau B."/>
            <person name="Shao Y."/>
        </authorList>
    </citation>
    <scope>NUCLEOTIDE SEQUENCE [LARGE SCALE GENOMIC DNA]</scope>
    <source>
        <strain>K12 / MG1655 / ATCC 47076</strain>
    </source>
</reference>
<reference key="4">
    <citation type="journal article" date="2006" name="Mol. Syst. Biol.">
        <title>Highly accurate genome sequences of Escherichia coli K-12 strains MG1655 and W3110.</title>
        <authorList>
            <person name="Hayashi K."/>
            <person name="Morooka N."/>
            <person name="Yamamoto Y."/>
            <person name="Fujita K."/>
            <person name="Isono K."/>
            <person name="Choi S."/>
            <person name="Ohtsubo E."/>
            <person name="Baba T."/>
            <person name="Wanner B.L."/>
            <person name="Mori H."/>
            <person name="Horiuchi T."/>
        </authorList>
    </citation>
    <scope>NUCLEOTIDE SEQUENCE [LARGE SCALE GENOMIC DNA]</scope>
    <source>
        <strain>K12 / W3110 / ATCC 27325 / DSM 5911</strain>
    </source>
</reference>
<reference key="5">
    <citation type="journal article" date="1990" name="Genetics">
        <title>Structural genes for nitrate-inducible formate dehydrogenase in Escherichia coli K-12.</title>
        <authorList>
            <person name="Berg B.L."/>
            <person name="Stewart V."/>
        </authorList>
    </citation>
    <scope>INDUCTION</scope>
    <source>
        <strain>K12</strain>
    </source>
</reference>
<reference evidence="5 6" key="6">
    <citation type="journal article" date="2002" name="Science">
        <title>Molecular basis of proton motive force generation: structure of formate dehydrogenase-N.</title>
        <authorList>
            <person name="Jormakka M."/>
            <person name="Tornroth S."/>
            <person name="Byrne B."/>
            <person name="Iwata S."/>
        </authorList>
    </citation>
    <scope>X-RAY CRYSTALLOGRAPHY (1.6 ANGSTROMS) IN COMPLEX WITH ALPHA AND GAMMA SUBUNITS AND [4FE-4S] CLUSTERS</scope>
    <scope>FUNCTION</scope>
    <scope>COFACTOR</scope>
    <scope>ELECTRON TRANSFER CHAIN</scope>
    <scope>SUBCELLULAR LOCATION</scope>
    <scope>SUBUNIT</scope>
</reference>
<proteinExistence type="evidence at protein level"/>
<sequence length="294" mass="32239">MAMETQDIIKRSATNSITPPSQVRDYKAEVAKLIDVSTCIGCKACQVACSEWNDIRDEVGHCVGVYDNPADLSAKSWTVMRFSETEQNGKLEWLIRKDGCMHCEDPGCLKACPSAGAIIQYANGIVDFQSENCIGCGYCIAGCPFNIPRLNKEDNRVYKCTLCVDRVSVGQEPACVKTCPTGAIHFGTKKEMLELAEQRVAKLKARGYEHAGVYNPEGVGGTHVMYVLHHADQPELYHGLPKDPKIDTSVSLWKGALKPLAAAGFIATFAGLIFHYIGIGPNKEVDDDEEDHHE</sequence>
<name>FDNH_ECOLI</name>
<dbReference type="EMBL" id="M75029">
    <property type="status" value="NOT_ANNOTATED_CDS"/>
    <property type="molecule type" value="Genomic_DNA"/>
</dbReference>
<dbReference type="EMBL" id="U00096">
    <property type="protein sequence ID" value="AAD13439.1"/>
    <property type="molecule type" value="Genomic_DNA"/>
</dbReference>
<dbReference type="EMBL" id="AP009048">
    <property type="protein sequence ID" value="BAA15124.1"/>
    <property type="molecule type" value="Genomic_DNA"/>
</dbReference>
<dbReference type="PIR" id="F64900">
    <property type="entry name" value="JS0629"/>
</dbReference>
<dbReference type="RefSeq" id="NP_415992.1">
    <property type="nucleotide sequence ID" value="NC_000913.3"/>
</dbReference>
<dbReference type="RefSeq" id="WP_001240582.1">
    <property type="nucleotide sequence ID" value="NZ_STEB01000053.1"/>
</dbReference>
<dbReference type="PDB" id="1KQF">
    <property type="method" value="X-ray"/>
    <property type="resolution" value="1.60 A"/>
    <property type="chains" value="B=1-294"/>
</dbReference>
<dbReference type="PDB" id="1KQG">
    <property type="method" value="X-ray"/>
    <property type="resolution" value="2.80 A"/>
    <property type="chains" value="B=1-294"/>
</dbReference>
<dbReference type="PDBsum" id="1KQF"/>
<dbReference type="PDBsum" id="1KQG"/>
<dbReference type="SMR" id="P0AAJ3"/>
<dbReference type="BioGRID" id="4262901">
    <property type="interactions" value="41"/>
</dbReference>
<dbReference type="ComplexPortal" id="CPX-1975">
    <property type="entry name" value="Formate dehydrogenase N complex"/>
</dbReference>
<dbReference type="DIP" id="DIP-35836N"/>
<dbReference type="FunCoup" id="P0AAJ3">
    <property type="interactions" value="465"/>
</dbReference>
<dbReference type="IntAct" id="P0AAJ3">
    <property type="interactions" value="18"/>
</dbReference>
<dbReference type="STRING" id="511145.b1475"/>
<dbReference type="DrugBank" id="DB07918">
    <property type="generic name" value="2-heptyl-4-hydroxyquinoline N-oxide"/>
</dbReference>
<dbReference type="TCDB" id="5.A.3.2.1">
    <property type="family name" value="the prokaryotic molybdopterin-containing oxidoreductase (pmo) family"/>
</dbReference>
<dbReference type="jPOST" id="P0AAJ3"/>
<dbReference type="PaxDb" id="511145-b1475"/>
<dbReference type="EnsemblBacteria" id="AAD13439">
    <property type="protein sequence ID" value="AAD13439"/>
    <property type="gene ID" value="b1475"/>
</dbReference>
<dbReference type="GeneID" id="86859779"/>
<dbReference type="GeneID" id="948794"/>
<dbReference type="KEGG" id="ecj:JW1471"/>
<dbReference type="KEGG" id="eco:b1475"/>
<dbReference type="KEGG" id="ecoc:C3026_08555"/>
<dbReference type="PATRIC" id="fig|1411691.4.peg.792"/>
<dbReference type="EchoBASE" id="EB1210"/>
<dbReference type="eggNOG" id="COG0437">
    <property type="taxonomic scope" value="Bacteria"/>
</dbReference>
<dbReference type="HOGENOM" id="CLU_043374_0_3_6"/>
<dbReference type="InParanoid" id="P0AAJ3"/>
<dbReference type="OMA" id="FCVDRIQ"/>
<dbReference type="OrthoDB" id="9779457at2"/>
<dbReference type="PhylomeDB" id="P0AAJ3"/>
<dbReference type="BioCyc" id="EcoCyc:FDNH-MONOMER"/>
<dbReference type="BioCyc" id="MetaCyc:FDNH-MONOMER"/>
<dbReference type="BRENDA" id="1.17.5.3">
    <property type="organism ID" value="2026"/>
</dbReference>
<dbReference type="EvolutionaryTrace" id="P0AAJ3"/>
<dbReference type="PRO" id="PR:P0AAJ3"/>
<dbReference type="Proteomes" id="UP000000625">
    <property type="component" value="Chromosome"/>
</dbReference>
<dbReference type="GO" id="GO:0009326">
    <property type="term" value="C:formate dehydrogenase complex"/>
    <property type="evidence" value="ECO:0000314"/>
    <property type="project" value="EcoCyc"/>
</dbReference>
<dbReference type="GO" id="GO:0016020">
    <property type="term" value="C:membrane"/>
    <property type="evidence" value="ECO:0000314"/>
    <property type="project" value="ComplexPortal"/>
</dbReference>
<dbReference type="GO" id="GO:0005886">
    <property type="term" value="C:plasma membrane"/>
    <property type="evidence" value="ECO:0007669"/>
    <property type="project" value="UniProtKB-SubCell"/>
</dbReference>
<dbReference type="GO" id="GO:0051539">
    <property type="term" value="F:4 iron, 4 sulfur cluster binding"/>
    <property type="evidence" value="ECO:0000314"/>
    <property type="project" value="EcoCyc"/>
</dbReference>
<dbReference type="GO" id="GO:0009055">
    <property type="term" value="F:electron transfer activity"/>
    <property type="evidence" value="ECO:0000314"/>
    <property type="project" value="EcoCyc"/>
</dbReference>
<dbReference type="GO" id="GO:0036397">
    <property type="term" value="F:formate dehydrogenase (quinone) activity"/>
    <property type="evidence" value="ECO:0000314"/>
    <property type="project" value="EcoCyc"/>
</dbReference>
<dbReference type="GO" id="GO:0046872">
    <property type="term" value="F:metal ion binding"/>
    <property type="evidence" value="ECO:0007669"/>
    <property type="project" value="UniProtKB-KW"/>
</dbReference>
<dbReference type="GO" id="GO:0019645">
    <property type="term" value="P:anaerobic electron transport chain"/>
    <property type="evidence" value="ECO:0000303"/>
    <property type="project" value="ComplexPortal"/>
</dbReference>
<dbReference type="GO" id="GO:0009061">
    <property type="term" value="P:anaerobic respiration"/>
    <property type="evidence" value="ECO:0000270"/>
    <property type="project" value="EcoCyc"/>
</dbReference>
<dbReference type="GO" id="GO:0015944">
    <property type="term" value="P:formate oxidation"/>
    <property type="evidence" value="ECO:0000314"/>
    <property type="project" value="EcoCyc"/>
</dbReference>
<dbReference type="GO" id="GO:0006788">
    <property type="term" value="P:heme oxidation"/>
    <property type="evidence" value="ECO:0000303"/>
    <property type="project" value="ComplexPortal"/>
</dbReference>
<dbReference type="CDD" id="cd10558">
    <property type="entry name" value="FDH-N"/>
    <property type="match status" value="1"/>
</dbReference>
<dbReference type="FunFam" id="1.20.5.480:FF:000001">
    <property type="entry name" value="Formate dehydrogenase iron-sulfur subunit"/>
    <property type="match status" value="1"/>
</dbReference>
<dbReference type="Gene3D" id="3.30.70.20">
    <property type="match status" value="2"/>
</dbReference>
<dbReference type="Gene3D" id="1.20.5.480">
    <property type="entry name" value="Single helix bin"/>
    <property type="match status" value="1"/>
</dbReference>
<dbReference type="InterPro" id="IPR017896">
    <property type="entry name" value="4Fe4S_Fe-S-bd"/>
</dbReference>
<dbReference type="InterPro" id="IPR017900">
    <property type="entry name" value="4Fe4S_Fe_S_CS"/>
</dbReference>
<dbReference type="InterPro" id="IPR051555">
    <property type="entry name" value="FDH_Electron_Transfer_Unit"/>
</dbReference>
<dbReference type="InterPro" id="IPR006470">
    <property type="entry name" value="Formate_DH_bsu_Proteobacteria"/>
</dbReference>
<dbReference type="InterPro" id="IPR038384">
    <property type="entry name" value="Formate_DH_C_sf"/>
</dbReference>
<dbReference type="InterPro" id="IPR014603">
    <property type="entry name" value="Formate_DH_Fe-S_su"/>
</dbReference>
<dbReference type="InterPro" id="IPR015246">
    <property type="entry name" value="Formate_DH_TM"/>
</dbReference>
<dbReference type="NCBIfam" id="TIGR01582">
    <property type="entry name" value="FDH-beta"/>
    <property type="match status" value="1"/>
</dbReference>
<dbReference type="PANTHER" id="PTHR43545">
    <property type="entry name" value="FORMATE DEHYDROGENASE, NITRATE-INDUCIBLE, IRON-SULFUR SUBUNIT"/>
    <property type="match status" value="1"/>
</dbReference>
<dbReference type="PANTHER" id="PTHR43545:SF6">
    <property type="entry name" value="FORMATE DEHYDROGENASE, NITRATE-INDUCIBLE, IRON-SULFUR SUBUNIT"/>
    <property type="match status" value="1"/>
</dbReference>
<dbReference type="Pfam" id="PF13247">
    <property type="entry name" value="Fer4_11"/>
    <property type="match status" value="1"/>
</dbReference>
<dbReference type="Pfam" id="PF12800">
    <property type="entry name" value="Fer4_4"/>
    <property type="match status" value="1"/>
</dbReference>
<dbReference type="Pfam" id="PF09163">
    <property type="entry name" value="Form-deh_trans"/>
    <property type="match status" value="1"/>
</dbReference>
<dbReference type="PIRSF" id="PIRSF036298">
    <property type="entry name" value="FDH_4Fe4S"/>
    <property type="match status" value="1"/>
</dbReference>
<dbReference type="SUPFAM" id="SSF54862">
    <property type="entry name" value="4Fe-4S ferredoxins"/>
    <property type="match status" value="1"/>
</dbReference>
<dbReference type="PROSITE" id="PS00198">
    <property type="entry name" value="4FE4S_FER_1"/>
    <property type="match status" value="1"/>
</dbReference>
<dbReference type="PROSITE" id="PS51379">
    <property type="entry name" value="4FE4S_FER_2"/>
    <property type="match status" value="4"/>
</dbReference>
<protein>
    <recommendedName>
        <fullName>Formate dehydrogenase, nitrate-inducible, iron-sulfur subunit</fullName>
    </recommendedName>
    <alternativeName>
        <fullName>Anaerobic formate dehydrogenase iron-sulfur subunit</fullName>
    </alternativeName>
    <alternativeName>
        <fullName>Formate dehydrogenase-N subunit beta</fullName>
        <shortName>FDH-N subunit beta</shortName>
    </alternativeName>
</protein>
<gene>
    <name type="primary">fdnH</name>
    <name type="ordered locus">b1475</name>
    <name type="ordered locus">JW1471</name>
</gene>
<evidence type="ECO:0000255" key="1">
    <source>
        <dbReference type="PROSITE-ProRule" id="PRU00711"/>
    </source>
</evidence>
<evidence type="ECO:0000269" key="2">
    <source>
    </source>
</evidence>
<evidence type="ECO:0000269" key="3">
    <source>
    </source>
</evidence>
<evidence type="ECO:0000305" key="4"/>
<evidence type="ECO:0007744" key="5">
    <source>
        <dbReference type="PDB" id="1KQF"/>
    </source>
</evidence>
<evidence type="ECO:0007744" key="6">
    <source>
        <dbReference type="PDB" id="1KQG"/>
    </source>
</evidence>
<evidence type="ECO:0007829" key="7">
    <source>
        <dbReference type="PDB" id="1KQF"/>
    </source>
</evidence>
<accession>P0AAJ3</accession>
<accession>P24184</accession>
<accession>P77166</accession>
<keyword id="KW-0002">3D-structure</keyword>
<keyword id="KW-0004">4Fe-4S</keyword>
<keyword id="KW-0997">Cell inner membrane</keyword>
<keyword id="KW-1003">Cell membrane</keyword>
<keyword id="KW-0249">Electron transport</keyword>
<keyword id="KW-0408">Iron</keyword>
<keyword id="KW-0411">Iron-sulfur</keyword>
<keyword id="KW-0472">Membrane</keyword>
<keyword id="KW-0479">Metal-binding</keyword>
<keyword id="KW-1185">Reference proteome</keyword>
<keyword id="KW-0677">Repeat</keyword>
<keyword id="KW-0812">Transmembrane</keyword>
<keyword id="KW-1133">Transmembrane helix</keyword>
<keyword id="KW-0813">Transport</keyword>
<organism>
    <name type="scientific">Escherichia coli (strain K12)</name>
    <dbReference type="NCBI Taxonomy" id="83333"/>
    <lineage>
        <taxon>Bacteria</taxon>
        <taxon>Pseudomonadati</taxon>
        <taxon>Pseudomonadota</taxon>
        <taxon>Gammaproteobacteria</taxon>
        <taxon>Enterobacterales</taxon>
        <taxon>Enterobacteriaceae</taxon>
        <taxon>Escherichia</taxon>
    </lineage>
</organism>
<feature type="chain" id="PRO_0000159247" description="Formate dehydrogenase, nitrate-inducible, iron-sulfur subunit">
    <location>
        <begin position="1"/>
        <end position="294"/>
    </location>
</feature>
<feature type="topological domain" description="Periplasmic">
    <location>
        <begin position="1"/>
        <end position="256"/>
    </location>
</feature>
<feature type="transmembrane region" description="Helical">
    <location>
        <begin position="257"/>
        <end position="279"/>
    </location>
</feature>
<feature type="topological domain" description="Cytoplasmic">
    <location>
        <begin position="280"/>
        <end position="294"/>
    </location>
</feature>
<feature type="domain" description="4Fe-4S ferredoxin-type 1" evidence="1">
    <location>
        <begin position="30"/>
        <end position="58"/>
    </location>
</feature>
<feature type="domain" description="4Fe-4S ferredoxin-type 2" evidence="1">
    <location>
        <begin position="91"/>
        <end position="123"/>
    </location>
</feature>
<feature type="domain" description="4Fe-4S ferredoxin-type 3" evidence="1">
    <location>
        <begin position="124"/>
        <end position="153"/>
    </location>
</feature>
<feature type="domain" description="4Fe-4S ferredoxin-type 4" evidence="1">
    <location>
        <begin position="158"/>
        <end position="189"/>
    </location>
</feature>
<feature type="binding site" evidence="2">
    <location>
        <position position="39"/>
    </location>
    <ligand>
        <name>[4Fe-4S] cluster</name>
        <dbReference type="ChEBI" id="CHEBI:49883"/>
        <label>1</label>
    </ligand>
</feature>
<feature type="binding site" evidence="2">
    <location>
        <position position="42"/>
    </location>
    <ligand>
        <name>[4Fe-4S] cluster</name>
        <dbReference type="ChEBI" id="CHEBI:49883"/>
        <label>1</label>
    </ligand>
</feature>
<feature type="binding site" evidence="2">
    <location>
        <position position="45"/>
    </location>
    <ligand>
        <name>[4Fe-4S] cluster</name>
        <dbReference type="ChEBI" id="CHEBI:49883"/>
        <label>1</label>
    </ligand>
</feature>
<feature type="binding site" evidence="2">
    <location>
        <position position="49"/>
    </location>
    <ligand>
        <name>[4Fe-4S] cluster</name>
        <dbReference type="ChEBI" id="CHEBI:49883"/>
        <label>2</label>
    </ligand>
</feature>
<feature type="binding site" evidence="2">
    <location>
        <position position="100"/>
    </location>
    <ligand>
        <name>[4Fe-4S] cluster</name>
        <dbReference type="ChEBI" id="CHEBI:49883"/>
        <label>3</label>
    </ligand>
</feature>
<feature type="binding site" evidence="2">
    <location>
        <position position="103"/>
    </location>
    <ligand>
        <name>[4Fe-4S] cluster</name>
        <dbReference type="ChEBI" id="CHEBI:49883"/>
        <label>3</label>
    </ligand>
</feature>
<feature type="binding site" evidence="2">
    <location>
        <position position="108"/>
    </location>
    <ligand>
        <name>[4Fe-4S] cluster</name>
        <dbReference type="ChEBI" id="CHEBI:49883"/>
        <label>3</label>
    </ligand>
</feature>
<feature type="binding site" evidence="2">
    <location>
        <position position="112"/>
    </location>
    <ligand>
        <name>[4Fe-4S] cluster</name>
        <dbReference type="ChEBI" id="CHEBI:49883"/>
        <label>4</label>
    </ligand>
</feature>
<feature type="binding site" evidence="2">
    <location>
        <position position="133"/>
    </location>
    <ligand>
        <name>[4Fe-4S] cluster</name>
        <dbReference type="ChEBI" id="CHEBI:49883"/>
        <label>4</label>
    </ligand>
</feature>
<feature type="binding site" evidence="2">
    <location>
        <position position="136"/>
    </location>
    <ligand>
        <name>[4Fe-4S] cluster</name>
        <dbReference type="ChEBI" id="CHEBI:49883"/>
        <label>4</label>
    </ligand>
</feature>
<feature type="binding site" evidence="2">
    <location>
        <position position="139"/>
    </location>
    <ligand>
        <name>[4Fe-4S] cluster</name>
        <dbReference type="ChEBI" id="CHEBI:49883"/>
        <label>4</label>
    </ligand>
</feature>
<feature type="binding site" evidence="2">
    <location>
        <position position="143"/>
    </location>
    <ligand>
        <name>[4Fe-4S] cluster</name>
        <dbReference type="ChEBI" id="CHEBI:49883"/>
        <label>3</label>
    </ligand>
</feature>
<feature type="binding site" evidence="2">
    <location>
        <position position="160"/>
    </location>
    <ligand>
        <name>[4Fe-4S] cluster</name>
        <dbReference type="ChEBI" id="CHEBI:49883"/>
        <label>2</label>
    </ligand>
</feature>
<feature type="binding site" evidence="2">
    <location>
        <position position="163"/>
    </location>
    <ligand>
        <name>[4Fe-4S] cluster</name>
        <dbReference type="ChEBI" id="CHEBI:49883"/>
        <label>2</label>
    </ligand>
</feature>
<feature type="binding site" evidence="2">
    <location>
        <position position="175"/>
    </location>
    <ligand>
        <name>[4Fe-4S] cluster</name>
        <dbReference type="ChEBI" id="CHEBI:49883"/>
        <label>2</label>
    </ligand>
</feature>
<feature type="binding site" evidence="2">
    <location>
        <position position="179"/>
    </location>
    <ligand>
        <name>[4Fe-4S] cluster</name>
        <dbReference type="ChEBI" id="CHEBI:49883"/>
        <label>1</label>
    </ligand>
</feature>
<feature type="sequence conflict" description="In Ref. 1." evidence="4" ref="1">
    <original>MH</original>
    <variation>ID</variation>
    <location>
        <begin position="101"/>
        <end position="102"/>
    </location>
</feature>
<feature type="strand" evidence="7">
    <location>
        <begin position="8"/>
        <end position="11"/>
    </location>
</feature>
<feature type="strand" evidence="7">
    <location>
        <begin position="30"/>
        <end position="35"/>
    </location>
</feature>
<feature type="turn" evidence="7">
    <location>
        <begin position="36"/>
        <end position="38"/>
    </location>
</feature>
<feature type="helix" evidence="7">
    <location>
        <begin position="44"/>
        <end position="53"/>
    </location>
</feature>
<feature type="strand" evidence="7">
    <location>
        <begin position="63"/>
        <end position="66"/>
    </location>
</feature>
<feature type="strand" evidence="7">
    <location>
        <begin position="69"/>
        <end position="71"/>
    </location>
</feature>
<feature type="strand" evidence="7">
    <location>
        <begin position="79"/>
        <end position="85"/>
    </location>
</feature>
<feature type="strand" evidence="7">
    <location>
        <begin position="92"/>
        <end position="99"/>
    </location>
</feature>
<feature type="strand" evidence="7">
    <location>
        <begin position="103"/>
        <end position="105"/>
    </location>
</feature>
<feature type="helix" evidence="7">
    <location>
        <begin position="107"/>
        <end position="111"/>
    </location>
</feature>
<feature type="strand" evidence="7">
    <location>
        <begin position="117"/>
        <end position="121"/>
    </location>
</feature>
<feature type="strand" evidence="7">
    <location>
        <begin position="126"/>
        <end position="128"/>
    </location>
</feature>
<feature type="helix" evidence="7">
    <location>
        <begin position="130"/>
        <end position="132"/>
    </location>
</feature>
<feature type="helix" evidence="7">
    <location>
        <begin position="138"/>
        <end position="142"/>
    </location>
</feature>
<feature type="turn" evidence="7">
    <location>
        <begin position="152"/>
        <end position="154"/>
    </location>
</feature>
<feature type="helix" evidence="7">
    <location>
        <begin position="164"/>
        <end position="167"/>
    </location>
</feature>
<feature type="turn" evidence="7">
    <location>
        <begin position="168"/>
        <end position="170"/>
    </location>
</feature>
<feature type="helix" evidence="7">
    <location>
        <begin position="174"/>
        <end position="178"/>
    </location>
</feature>
<feature type="strand" evidence="7">
    <location>
        <begin position="184"/>
        <end position="188"/>
    </location>
</feature>
<feature type="helix" evidence="7">
    <location>
        <begin position="189"/>
        <end position="205"/>
    </location>
</feature>
<feature type="strand" evidence="7">
    <location>
        <begin position="212"/>
        <end position="214"/>
    </location>
</feature>
<feature type="helix" evidence="7">
    <location>
        <begin position="217"/>
        <end position="219"/>
    </location>
</feature>
<feature type="strand" evidence="7">
    <location>
        <begin position="222"/>
        <end position="228"/>
    </location>
</feature>
<feature type="turn" evidence="7">
    <location>
        <begin position="229"/>
        <end position="232"/>
    </location>
</feature>
<feature type="helix" evidence="7">
    <location>
        <begin position="234"/>
        <end position="236"/>
    </location>
</feature>
<feature type="turn" evidence="7">
    <location>
        <begin position="237"/>
        <end position="239"/>
    </location>
</feature>
<feature type="helix" evidence="7">
    <location>
        <begin position="248"/>
        <end position="254"/>
    </location>
</feature>
<feature type="helix" evidence="7">
    <location>
        <begin position="257"/>
        <end position="279"/>
    </location>
</feature>